<keyword id="KW-0067">ATP-binding</keyword>
<keyword id="KW-0436">Ligase</keyword>
<keyword id="KW-0547">Nucleotide-binding</keyword>
<keyword id="KW-0648">Protein biosynthesis</keyword>
<keyword id="KW-1185">Reference proteome</keyword>
<reference key="1">
    <citation type="journal article" date="2011" name="Stand. Genomic Sci.">
        <title>Complete genome sequence of the halophilic and highly halotolerant Chromohalobacter salexigens type strain (1H11(T)).</title>
        <authorList>
            <person name="Copeland A."/>
            <person name="O'Connor K."/>
            <person name="Lucas S."/>
            <person name="Lapidus A."/>
            <person name="Berry K.W."/>
            <person name="Detter J.C."/>
            <person name="Del Rio T.G."/>
            <person name="Hammon N."/>
            <person name="Dalin E."/>
            <person name="Tice H."/>
            <person name="Pitluck S."/>
            <person name="Bruce D."/>
            <person name="Goodwin L."/>
            <person name="Han C."/>
            <person name="Tapia R."/>
            <person name="Saunders E."/>
            <person name="Schmutz J."/>
            <person name="Brettin T."/>
            <person name="Larimer F."/>
            <person name="Land M."/>
            <person name="Hauser L."/>
            <person name="Vargas C."/>
            <person name="Nieto J.J."/>
            <person name="Kyrpides N.C."/>
            <person name="Ivanova N."/>
            <person name="Goker M."/>
            <person name="Klenk H.P."/>
            <person name="Csonka L.N."/>
            <person name="Woyke T."/>
        </authorList>
    </citation>
    <scope>NUCLEOTIDE SEQUENCE [LARGE SCALE GENOMIC DNA]</scope>
    <source>
        <strain>ATCC BAA-138 / DSM 3043 / CIP 106854 / NCIMB 13768 / 1H11</strain>
    </source>
</reference>
<evidence type="ECO:0000255" key="1">
    <source>
        <dbReference type="HAMAP-Rule" id="MF_00120"/>
    </source>
</evidence>
<feature type="chain" id="PRO_1000015821" description="Glutamyl-tRNA(Gln) amidotransferase subunit A">
    <location>
        <begin position="1"/>
        <end position="486"/>
    </location>
</feature>
<feature type="active site" description="Charge relay system" evidence="1">
    <location>
        <position position="76"/>
    </location>
</feature>
<feature type="active site" description="Charge relay system" evidence="1">
    <location>
        <position position="151"/>
    </location>
</feature>
<feature type="active site" description="Acyl-ester intermediate" evidence="1">
    <location>
        <position position="175"/>
    </location>
</feature>
<name>GATA_CHRSD</name>
<protein>
    <recommendedName>
        <fullName evidence="1">Glutamyl-tRNA(Gln) amidotransferase subunit A</fullName>
        <shortName evidence="1">Glu-ADT subunit A</shortName>
        <ecNumber evidence="1">6.3.5.7</ecNumber>
    </recommendedName>
</protein>
<sequence>MHDKTLTELAAGLRAGEFSSRELCQSALDRIQRLDGDLNSFISVTAEQALADADAADQARASGDAAALAGLPLALKDIFCTQGVRTSCGSKMLDSFVAPYDATVVEKIRQAGGVSLGKTNMDEFAMGSSNENSFYGPVKNPWDLSAVPGGSSGGSAAAVAAGLVPAALGTDTGGSIRQPAAFCGITGLKPTYGRVSRYGMVAYASSLDQGGPMARTAADCALLLETIAGHDVRDSTSVARVVPDYSAELDTSLAGLKIGLPKEYFGDGLDPEVETAVREAIKVYESLGAKVCEVSLPHTHLAIPAYYVIAPAEASSNLSRYDGVRFGHRCEDPTDLEDLYKRTRAEGFGEEVKRRILIGTHTLSEGFFDAYYLKAQQVRRLIRQDFLDAFDEVDVLMGPTAPTPAFDLGAQKDPVSMYLQDIYTIAVNLAGIPGISVPAGFAGNRPVGLQVLAPHFAEAQLLGVAHQFQQATDWHLKRPAFGKEMA</sequence>
<dbReference type="EC" id="6.3.5.7" evidence="1"/>
<dbReference type="EMBL" id="CP000285">
    <property type="protein sequence ID" value="ABE59593.1"/>
    <property type="molecule type" value="Genomic_DNA"/>
</dbReference>
<dbReference type="RefSeq" id="WP_011507539.1">
    <property type="nucleotide sequence ID" value="NC_007963.1"/>
</dbReference>
<dbReference type="SMR" id="Q1QVB5"/>
<dbReference type="STRING" id="290398.Csal_2242"/>
<dbReference type="GeneID" id="95334960"/>
<dbReference type="KEGG" id="csa:Csal_2242"/>
<dbReference type="eggNOG" id="COG0154">
    <property type="taxonomic scope" value="Bacteria"/>
</dbReference>
<dbReference type="HOGENOM" id="CLU_009600_0_3_6"/>
<dbReference type="OrthoDB" id="8872210at2"/>
<dbReference type="Proteomes" id="UP000000239">
    <property type="component" value="Chromosome"/>
</dbReference>
<dbReference type="GO" id="GO:0030956">
    <property type="term" value="C:glutamyl-tRNA(Gln) amidotransferase complex"/>
    <property type="evidence" value="ECO:0007669"/>
    <property type="project" value="InterPro"/>
</dbReference>
<dbReference type="GO" id="GO:0005524">
    <property type="term" value="F:ATP binding"/>
    <property type="evidence" value="ECO:0007669"/>
    <property type="project" value="UniProtKB-KW"/>
</dbReference>
<dbReference type="GO" id="GO:0050567">
    <property type="term" value="F:glutaminyl-tRNA synthase (glutamine-hydrolyzing) activity"/>
    <property type="evidence" value="ECO:0007669"/>
    <property type="project" value="UniProtKB-UniRule"/>
</dbReference>
<dbReference type="GO" id="GO:0006412">
    <property type="term" value="P:translation"/>
    <property type="evidence" value="ECO:0007669"/>
    <property type="project" value="UniProtKB-UniRule"/>
</dbReference>
<dbReference type="Gene3D" id="3.90.1300.10">
    <property type="entry name" value="Amidase signature (AS) domain"/>
    <property type="match status" value="1"/>
</dbReference>
<dbReference type="HAMAP" id="MF_00120">
    <property type="entry name" value="GatA"/>
    <property type="match status" value="1"/>
</dbReference>
<dbReference type="InterPro" id="IPR000120">
    <property type="entry name" value="Amidase"/>
</dbReference>
<dbReference type="InterPro" id="IPR020556">
    <property type="entry name" value="Amidase_CS"/>
</dbReference>
<dbReference type="InterPro" id="IPR023631">
    <property type="entry name" value="Amidase_dom"/>
</dbReference>
<dbReference type="InterPro" id="IPR036928">
    <property type="entry name" value="AS_sf"/>
</dbReference>
<dbReference type="InterPro" id="IPR004412">
    <property type="entry name" value="GatA"/>
</dbReference>
<dbReference type="NCBIfam" id="TIGR00132">
    <property type="entry name" value="gatA"/>
    <property type="match status" value="1"/>
</dbReference>
<dbReference type="PANTHER" id="PTHR11895:SF151">
    <property type="entry name" value="GLUTAMYL-TRNA(GLN) AMIDOTRANSFERASE SUBUNIT A"/>
    <property type="match status" value="1"/>
</dbReference>
<dbReference type="PANTHER" id="PTHR11895">
    <property type="entry name" value="TRANSAMIDASE"/>
    <property type="match status" value="1"/>
</dbReference>
<dbReference type="Pfam" id="PF01425">
    <property type="entry name" value="Amidase"/>
    <property type="match status" value="1"/>
</dbReference>
<dbReference type="SUPFAM" id="SSF75304">
    <property type="entry name" value="Amidase signature (AS) enzymes"/>
    <property type="match status" value="1"/>
</dbReference>
<dbReference type="PROSITE" id="PS00571">
    <property type="entry name" value="AMIDASES"/>
    <property type="match status" value="1"/>
</dbReference>
<gene>
    <name evidence="1" type="primary">gatA</name>
    <name type="ordered locus">Csal_2242</name>
</gene>
<organism>
    <name type="scientific">Chromohalobacter salexigens (strain ATCC BAA-138 / DSM 3043 / CIP 106854 / NCIMB 13768 / 1H11)</name>
    <dbReference type="NCBI Taxonomy" id="290398"/>
    <lineage>
        <taxon>Bacteria</taxon>
        <taxon>Pseudomonadati</taxon>
        <taxon>Pseudomonadota</taxon>
        <taxon>Gammaproteobacteria</taxon>
        <taxon>Oceanospirillales</taxon>
        <taxon>Halomonadaceae</taxon>
        <taxon>Chromohalobacter</taxon>
    </lineage>
</organism>
<comment type="function">
    <text evidence="1">Allows the formation of correctly charged Gln-tRNA(Gln) through the transamidation of misacylated Glu-tRNA(Gln) in organisms which lack glutaminyl-tRNA synthetase. The reaction takes place in the presence of glutamine and ATP through an activated gamma-phospho-Glu-tRNA(Gln).</text>
</comment>
<comment type="catalytic activity">
    <reaction evidence="1">
        <text>L-glutamyl-tRNA(Gln) + L-glutamine + ATP + H2O = L-glutaminyl-tRNA(Gln) + L-glutamate + ADP + phosphate + H(+)</text>
        <dbReference type="Rhea" id="RHEA:17521"/>
        <dbReference type="Rhea" id="RHEA-COMP:9681"/>
        <dbReference type="Rhea" id="RHEA-COMP:9684"/>
        <dbReference type="ChEBI" id="CHEBI:15377"/>
        <dbReference type="ChEBI" id="CHEBI:15378"/>
        <dbReference type="ChEBI" id="CHEBI:29985"/>
        <dbReference type="ChEBI" id="CHEBI:30616"/>
        <dbReference type="ChEBI" id="CHEBI:43474"/>
        <dbReference type="ChEBI" id="CHEBI:58359"/>
        <dbReference type="ChEBI" id="CHEBI:78520"/>
        <dbReference type="ChEBI" id="CHEBI:78521"/>
        <dbReference type="ChEBI" id="CHEBI:456216"/>
        <dbReference type="EC" id="6.3.5.7"/>
    </reaction>
</comment>
<comment type="subunit">
    <text evidence="1">Heterotrimer of A, B and C subunits.</text>
</comment>
<comment type="similarity">
    <text evidence="1">Belongs to the amidase family. GatA subfamily.</text>
</comment>
<accession>Q1QVB5</accession>
<proteinExistence type="inferred from homology"/>